<dbReference type="EC" id="7.1.1.2" evidence="1"/>
<dbReference type="EMBL" id="Y07726">
    <property type="protein sequence ID" value="CAA69015.1"/>
    <property type="molecule type" value="Genomic_DNA"/>
</dbReference>
<dbReference type="RefSeq" id="NP_007442.1">
    <property type="nucleotide sequence ID" value="NC_001808.1"/>
</dbReference>
<dbReference type="SMR" id="O03204"/>
<dbReference type="GeneID" id="808102"/>
<dbReference type="CTD" id="4538"/>
<dbReference type="OMA" id="ITRWGNQ"/>
<dbReference type="GO" id="GO:0005743">
    <property type="term" value="C:mitochondrial inner membrane"/>
    <property type="evidence" value="ECO:0000250"/>
    <property type="project" value="UniProtKB"/>
</dbReference>
<dbReference type="GO" id="GO:0008137">
    <property type="term" value="F:NADH dehydrogenase (ubiquinone) activity"/>
    <property type="evidence" value="ECO:0000250"/>
    <property type="project" value="UniProtKB"/>
</dbReference>
<dbReference type="GO" id="GO:0048039">
    <property type="term" value="F:ubiquinone binding"/>
    <property type="evidence" value="ECO:0007669"/>
    <property type="project" value="TreeGrafter"/>
</dbReference>
<dbReference type="GO" id="GO:0015990">
    <property type="term" value="P:electron transport coupled proton transport"/>
    <property type="evidence" value="ECO:0007669"/>
    <property type="project" value="TreeGrafter"/>
</dbReference>
<dbReference type="GO" id="GO:0006120">
    <property type="term" value="P:mitochondrial electron transport, NADH to ubiquinone"/>
    <property type="evidence" value="ECO:0000250"/>
    <property type="project" value="UniProtKB"/>
</dbReference>
<dbReference type="GO" id="GO:0032981">
    <property type="term" value="P:mitochondrial respiratory chain complex I assembly"/>
    <property type="evidence" value="ECO:0000250"/>
    <property type="project" value="UniProtKB"/>
</dbReference>
<dbReference type="InterPro" id="IPR000260">
    <property type="entry name" value="NADH4_N"/>
</dbReference>
<dbReference type="InterPro" id="IPR010227">
    <property type="entry name" value="NADH_Q_OxRdtase_chainM/4"/>
</dbReference>
<dbReference type="InterPro" id="IPR003918">
    <property type="entry name" value="NADH_UbQ_OxRdtase"/>
</dbReference>
<dbReference type="InterPro" id="IPR001750">
    <property type="entry name" value="ND/Mrp_TM"/>
</dbReference>
<dbReference type="NCBIfam" id="TIGR01972">
    <property type="entry name" value="NDH_I_M"/>
    <property type="match status" value="1"/>
</dbReference>
<dbReference type="PANTHER" id="PTHR43507">
    <property type="entry name" value="NADH-UBIQUINONE OXIDOREDUCTASE CHAIN 4"/>
    <property type="match status" value="1"/>
</dbReference>
<dbReference type="PANTHER" id="PTHR43507:SF20">
    <property type="entry name" value="NADH-UBIQUINONE OXIDOREDUCTASE CHAIN 4"/>
    <property type="match status" value="1"/>
</dbReference>
<dbReference type="Pfam" id="PF01059">
    <property type="entry name" value="Oxidored_q5_N"/>
    <property type="match status" value="1"/>
</dbReference>
<dbReference type="Pfam" id="PF00361">
    <property type="entry name" value="Proton_antipo_M"/>
    <property type="match status" value="1"/>
</dbReference>
<dbReference type="PRINTS" id="PR01437">
    <property type="entry name" value="NUOXDRDTASE4"/>
</dbReference>
<reference key="1">
    <citation type="journal article" date="1997" name="Mol. Phylogenet. Evol.">
        <title>The complete mitochondrial DNA sequence of the white rhinoceros, Ceratotherium simum, and comparison with the mtDNA sequence of the Indian rhinoceros, Rhinoceros unicornis.</title>
        <authorList>
            <person name="Xu X."/>
            <person name="Arnason U."/>
        </authorList>
    </citation>
    <scope>NUCLEOTIDE SEQUENCE [GENOMIC DNA]</scope>
</reference>
<feature type="chain" id="PRO_0000117919" description="NADH-ubiquinone oxidoreductase chain 4">
    <location>
        <begin position="1"/>
        <end position="459"/>
    </location>
</feature>
<feature type="transmembrane region" description="Helical" evidence="3">
    <location>
        <begin position="22"/>
        <end position="42"/>
    </location>
</feature>
<feature type="transmembrane region" description="Helical" evidence="3">
    <location>
        <begin position="60"/>
        <end position="80"/>
    </location>
</feature>
<feature type="transmembrane region" description="Helical" evidence="3">
    <location>
        <begin position="95"/>
        <end position="112"/>
    </location>
</feature>
<feature type="transmembrane region" description="Helical" evidence="3">
    <location>
        <begin position="113"/>
        <end position="133"/>
    </location>
</feature>
<feature type="transmembrane region" description="Helical" evidence="3">
    <location>
        <begin position="145"/>
        <end position="165"/>
    </location>
</feature>
<feature type="transmembrane region" description="Helical" evidence="3">
    <location>
        <begin position="194"/>
        <end position="214"/>
    </location>
</feature>
<feature type="transmembrane region" description="Helical" evidence="3">
    <location>
        <begin position="224"/>
        <end position="244"/>
    </location>
</feature>
<feature type="transmembrane region" description="Helical" evidence="3">
    <location>
        <begin position="257"/>
        <end position="277"/>
    </location>
</feature>
<feature type="transmembrane region" description="Helical" evidence="3">
    <location>
        <begin position="284"/>
        <end position="303"/>
    </location>
</feature>
<feature type="transmembrane region" description="Helical" evidence="3">
    <location>
        <begin position="308"/>
        <end position="330"/>
    </location>
</feature>
<feature type="transmembrane region" description="Helical" evidence="3">
    <location>
        <begin position="351"/>
        <end position="371"/>
    </location>
</feature>
<feature type="transmembrane region" description="Helical" evidence="3">
    <location>
        <begin position="391"/>
        <end position="411"/>
    </location>
</feature>
<feature type="transmembrane region" description="Helical" evidence="3">
    <location>
        <begin position="436"/>
        <end position="456"/>
    </location>
</feature>
<organism>
    <name type="scientific">Ceratotherium simum</name>
    <name type="common">White rhinoceros</name>
    <name type="synonym">Square-lipped rhinoceros</name>
    <dbReference type="NCBI Taxonomy" id="9807"/>
    <lineage>
        <taxon>Eukaryota</taxon>
        <taxon>Metazoa</taxon>
        <taxon>Chordata</taxon>
        <taxon>Craniata</taxon>
        <taxon>Vertebrata</taxon>
        <taxon>Euteleostomi</taxon>
        <taxon>Mammalia</taxon>
        <taxon>Eutheria</taxon>
        <taxon>Laurasiatheria</taxon>
        <taxon>Perissodactyla</taxon>
        <taxon>Rhinocerotidae</taxon>
        <taxon>Ceratotherium</taxon>
    </lineage>
</organism>
<protein>
    <recommendedName>
        <fullName>NADH-ubiquinone oxidoreductase chain 4</fullName>
        <ecNumber evidence="1">7.1.1.2</ecNumber>
    </recommendedName>
    <alternativeName>
        <fullName>NADH dehydrogenase subunit 4</fullName>
    </alternativeName>
</protein>
<geneLocation type="mitochondrion"/>
<evidence type="ECO:0000250" key="1">
    <source>
        <dbReference type="UniProtKB" id="P03905"/>
    </source>
</evidence>
<evidence type="ECO:0000250" key="2">
    <source>
        <dbReference type="UniProtKB" id="P03910"/>
    </source>
</evidence>
<evidence type="ECO:0000255" key="3"/>
<evidence type="ECO:0000305" key="4"/>
<sequence>MLKIIIPTLMLIPLTWLSKNSMIWINTTAYSLLISFISLPLLSQFNENSLNMSLTFFSDPLSAPLLVLTTWLLPLMIMASQHHLSKEPLARKKLYITMLITLQTFLIMTFTATELIFFYILFEATLIPTLIIITRWGNQTERLNAGFYFLFYTLTGSLPLLIALTHIQNLTGSLNLLLIQYSTQTLPSSWSNAFLWLACMMAFMVKMPLYGLHLWLPKAHVEAPIAGSMVLAAILLKLGGYGMLRITMILNPLTSYMAYPFLMLSLWGMIMTSSICLRQTDLKSLIAYSSVSHMALVIVAVLIQTPWSYMGATALMIAHGLTSSVLFCLANSNYERTHSRTMILARGLQTLLPLMAMWWLLASLTNLALPPTINLVGELFVVMSSFSWSNITIILMGTNIIITALYSLYMLITTQRGKYTHHINNIKPSFTRENTLMALHLLPLLLLSLNPKIILGTLY</sequence>
<keyword id="KW-0249">Electron transport</keyword>
<keyword id="KW-0472">Membrane</keyword>
<keyword id="KW-0496">Mitochondrion</keyword>
<keyword id="KW-0999">Mitochondrion inner membrane</keyword>
<keyword id="KW-0520">NAD</keyword>
<keyword id="KW-0679">Respiratory chain</keyword>
<keyword id="KW-1278">Translocase</keyword>
<keyword id="KW-0812">Transmembrane</keyword>
<keyword id="KW-1133">Transmembrane helix</keyword>
<keyword id="KW-0813">Transport</keyword>
<keyword id="KW-0830">Ubiquinone</keyword>
<comment type="function">
    <text evidence="1">Core subunit of the mitochondrial membrane respiratory chain NADH dehydrogenase (Complex I) which catalyzes electron transfer from NADH through the respiratory chain, using ubiquinone as an electron acceptor. Essential for the catalytic activity and assembly of complex I.</text>
</comment>
<comment type="catalytic activity">
    <reaction evidence="1">
        <text>a ubiquinone + NADH + 5 H(+)(in) = a ubiquinol + NAD(+) + 4 H(+)(out)</text>
        <dbReference type="Rhea" id="RHEA:29091"/>
        <dbReference type="Rhea" id="RHEA-COMP:9565"/>
        <dbReference type="Rhea" id="RHEA-COMP:9566"/>
        <dbReference type="ChEBI" id="CHEBI:15378"/>
        <dbReference type="ChEBI" id="CHEBI:16389"/>
        <dbReference type="ChEBI" id="CHEBI:17976"/>
        <dbReference type="ChEBI" id="CHEBI:57540"/>
        <dbReference type="ChEBI" id="CHEBI:57945"/>
        <dbReference type="EC" id="7.1.1.2"/>
    </reaction>
</comment>
<comment type="subunit">
    <text evidence="2">Core subunit of respiratory chain NADH dehydrogenase (Complex I) which is composed of 45 different subunits.</text>
</comment>
<comment type="subcellular location">
    <subcellularLocation>
        <location evidence="2">Mitochondrion inner membrane</location>
        <topology evidence="3">Multi-pass membrane protein</topology>
    </subcellularLocation>
</comment>
<comment type="similarity">
    <text evidence="4">Belongs to the complex I subunit 4 family.</text>
</comment>
<gene>
    <name type="primary">MT-ND4</name>
    <name type="synonym">MTND4</name>
    <name type="synonym">NADH4</name>
    <name type="synonym">ND4</name>
</gene>
<name>NU4M_CERSI</name>
<proteinExistence type="inferred from homology"/>
<accession>O03204</accession>